<name>DADA_SALPK</name>
<accession>B5BI50</accession>
<proteinExistence type="inferred from homology"/>
<feature type="chain" id="PRO_1000138668" description="D-amino acid dehydrogenase">
    <location>
        <begin position="1"/>
        <end position="432"/>
    </location>
</feature>
<feature type="binding site" evidence="1">
    <location>
        <begin position="3"/>
        <end position="17"/>
    </location>
    <ligand>
        <name>FAD</name>
        <dbReference type="ChEBI" id="CHEBI:57692"/>
    </ligand>
</feature>
<evidence type="ECO:0000255" key="1">
    <source>
        <dbReference type="HAMAP-Rule" id="MF_01202"/>
    </source>
</evidence>
<comment type="function">
    <text evidence="1">Oxidative deamination of D-amino acids.</text>
</comment>
<comment type="catalytic activity">
    <reaction evidence="1">
        <text>a D-alpha-amino acid + A + H2O = a 2-oxocarboxylate + AH2 + NH4(+)</text>
        <dbReference type="Rhea" id="RHEA:18125"/>
        <dbReference type="ChEBI" id="CHEBI:13193"/>
        <dbReference type="ChEBI" id="CHEBI:15377"/>
        <dbReference type="ChEBI" id="CHEBI:17499"/>
        <dbReference type="ChEBI" id="CHEBI:28938"/>
        <dbReference type="ChEBI" id="CHEBI:35179"/>
        <dbReference type="ChEBI" id="CHEBI:59871"/>
    </reaction>
</comment>
<comment type="cofactor">
    <cofactor evidence="1">
        <name>FAD</name>
        <dbReference type="ChEBI" id="CHEBI:57692"/>
    </cofactor>
</comment>
<comment type="pathway">
    <text>Amino-acid degradation; D-alanine degradation; NH(3) and pyruvate from D-alanine: step 1/1.</text>
</comment>
<comment type="similarity">
    <text evidence="1">Belongs to the DadA oxidoreductase family.</text>
</comment>
<gene>
    <name evidence="1" type="primary">dadA</name>
    <name type="ordered locus">SSPA0999</name>
</gene>
<sequence>MRVVILGSGVVGVTSAWYLSQAGHDVTVIDRESGPAQETSAANAGQISPGYAAPWAAPGVPLKAIKWMFQRHAPLAVRLDGTPFQLKWMWQMLRNCDTRHYMENKGRMVRLAEYSRDCLKTLRAATGIEYEGRQGGTLQLFRTAQQYENATRDIAVLEDAGVPYQLLEASRLAEVEPALAEVAHKLTGGLRLPNDETGDCQLFTQRLARMAEQAGVTFRFNTPVEKLLYENDQIYGVKCADEIIKADAYVMAFGSYSTAMLKGIVDIPVYPLKGYSLTIPIVEPDGAPVSTILDETYKIAITRFDKRIRVGGMAEIVGFNTDLLQPRRETLEMVVRDLFPRGGHIEQATFWTGLRPMTPDGTPVVGRTRYKNLWLNTGHGTLGWTMACGSGQLLSDILSGRTPAIPYDDLSVARYRSDFTPTRPQRLHSAHN</sequence>
<protein>
    <recommendedName>
        <fullName evidence="1">D-amino acid dehydrogenase</fullName>
        <ecNumber evidence="1">1.4.99.-</ecNumber>
    </recommendedName>
</protein>
<reference key="1">
    <citation type="journal article" date="2009" name="BMC Genomics">
        <title>Pseudogene accumulation in the evolutionary histories of Salmonella enterica serovars Paratyphi A and Typhi.</title>
        <authorList>
            <person name="Holt K.E."/>
            <person name="Thomson N.R."/>
            <person name="Wain J."/>
            <person name="Langridge G.C."/>
            <person name="Hasan R."/>
            <person name="Bhutta Z.A."/>
            <person name="Quail M.A."/>
            <person name="Norbertczak H."/>
            <person name="Walker D."/>
            <person name="Simmonds M."/>
            <person name="White B."/>
            <person name="Bason N."/>
            <person name="Mungall K."/>
            <person name="Dougan G."/>
            <person name="Parkhill J."/>
        </authorList>
    </citation>
    <scope>NUCLEOTIDE SEQUENCE [LARGE SCALE GENOMIC DNA]</scope>
    <source>
        <strain>AKU_12601</strain>
    </source>
</reference>
<keyword id="KW-0274">FAD</keyword>
<keyword id="KW-0285">Flavoprotein</keyword>
<keyword id="KW-0560">Oxidoreductase</keyword>
<dbReference type="EC" id="1.4.99.-" evidence="1"/>
<dbReference type="EMBL" id="FM200053">
    <property type="protein sequence ID" value="CAR59150.1"/>
    <property type="molecule type" value="Genomic_DNA"/>
</dbReference>
<dbReference type="RefSeq" id="WP_001266935.1">
    <property type="nucleotide sequence ID" value="NC_011147.1"/>
</dbReference>
<dbReference type="SMR" id="B5BI50"/>
<dbReference type="KEGG" id="sek:SSPA0999"/>
<dbReference type="HOGENOM" id="CLU_007884_9_2_6"/>
<dbReference type="UniPathway" id="UPA00043">
    <property type="reaction ID" value="UER00498"/>
</dbReference>
<dbReference type="Proteomes" id="UP000001869">
    <property type="component" value="Chromosome"/>
</dbReference>
<dbReference type="GO" id="GO:0005737">
    <property type="term" value="C:cytoplasm"/>
    <property type="evidence" value="ECO:0007669"/>
    <property type="project" value="TreeGrafter"/>
</dbReference>
<dbReference type="GO" id="GO:0005886">
    <property type="term" value="C:plasma membrane"/>
    <property type="evidence" value="ECO:0007669"/>
    <property type="project" value="TreeGrafter"/>
</dbReference>
<dbReference type="GO" id="GO:0008718">
    <property type="term" value="F:D-amino-acid dehydrogenase activity"/>
    <property type="evidence" value="ECO:0007669"/>
    <property type="project" value="UniProtKB-UniRule"/>
</dbReference>
<dbReference type="GO" id="GO:0055130">
    <property type="term" value="P:D-alanine catabolic process"/>
    <property type="evidence" value="ECO:0007669"/>
    <property type="project" value="UniProtKB-UniPathway"/>
</dbReference>
<dbReference type="FunFam" id="3.50.50.60:FF:000020">
    <property type="entry name" value="D-amino acid dehydrogenase"/>
    <property type="match status" value="1"/>
</dbReference>
<dbReference type="Gene3D" id="3.30.9.10">
    <property type="entry name" value="D-Amino Acid Oxidase, subunit A, domain 2"/>
    <property type="match status" value="1"/>
</dbReference>
<dbReference type="Gene3D" id="3.50.50.60">
    <property type="entry name" value="FAD/NAD(P)-binding domain"/>
    <property type="match status" value="2"/>
</dbReference>
<dbReference type="HAMAP" id="MF_01202">
    <property type="entry name" value="DadA"/>
    <property type="match status" value="1"/>
</dbReference>
<dbReference type="InterPro" id="IPR023080">
    <property type="entry name" value="DadA"/>
</dbReference>
<dbReference type="InterPro" id="IPR006076">
    <property type="entry name" value="FAD-dep_OxRdtase"/>
</dbReference>
<dbReference type="InterPro" id="IPR036188">
    <property type="entry name" value="FAD/NAD-bd_sf"/>
</dbReference>
<dbReference type="NCBIfam" id="NF001933">
    <property type="entry name" value="PRK00711.1"/>
    <property type="match status" value="1"/>
</dbReference>
<dbReference type="PANTHER" id="PTHR13847:SF280">
    <property type="entry name" value="D-AMINO ACID DEHYDROGENASE"/>
    <property type="match status" value="1"/>
</dbReference>
<dbReference type="PANTHER" id="PTHR13847">
    <property type="entry name" value="SARCOSINE DEHYDROGENASE-RELATED"/>
    <property type="match status" value="1"/>
</dbReference>
<dbReference type="Pfam" id="PF01266">
    <property type="entry name" value="DAO"/>
    <property type="match status" value="1"/>
</dbReference>
<dbReference type="SUPFAM" id="SSF54373">
    <property type="entry name" value="FAD-linked reductases, C-terminal domain"/>
    <property type="match status" value="1"/>
</dbReference>
<dbReference type="SUPFAM" id="SSF51905">
    <property type="entry name" value="FAD/NAD(P)-binding domain"/>
    <property type="match status" value="1"/>
</dbReference>
<organism>
    <name type="scientific">Salmonella paratyphi A (strain AKU_12601)</name>
    <dbReference type="NCBI Taxonomy" id="554290"/>
    <lineage>
        <taxon>Bacteria</taxon>
        <taxon>Pseudomonadati</taxon>
        <taxon>Pseudomonadota</taxon>
        <taxon>Gammaproteobacteria</taxon>
        <taxon>Enterobacterales</taxon>
        <taxon>Enterobacteriaceae</taxon>
        <taxon>Salmonella</taxon>
    </lineage>
</organism>